<accession>A4SRS3</accession>
<sequence>MLIVVSPAKTLDYESPLVISRFTQPQLLDHSAELITRARQLSPDQIASLMKISDKLAGLNAARFAQWQHDFHPDNARQALLAFKGDVYTGLAVEDFSDGDFDFAQAHLRMLSGLYGVLRPLDLMMPYRLEMGTRLDNSRGKDLYQFWGDVITQHINAALTAQGDEVLINLASDEYFKSVRPKALKGRIVTPVFKDEKNGQFKIISFYAKKARGMMARHIIKHRLTEVEQLTGFNVDGYYFVPEESDAHTLMFKRAEN</sequence>
<proteinExistence type="inferred from homology"/>
<dbReference type="EMBL" id="CP000644">
    <property type="protein sequence ID" value="ABO91595.1"/>
    <property type="molecule type" value="Genomic_DNA"/>
</dbReference>
<dbReference type="SMR" id="A4SRS3"/>
<dbReference type="STRING" id="29491.GCA_000820065_02489"/>
<dbReference type="KEGG" id="asa:ASA_3634"/>
<dbReference type="eggNOG" id="COG3022">
    <property type="taxonomic scope" value="Bacteria"/>
</dbReference>
<dbReference type="HOGENOM" id="CLU_061989_0_0_6"/>
<dbReference type="Proteomes" id="UP000000225">
    <property type="component" value="Chromosome"/>
</dbReference>
<dbReference type="GO" id="GO:0005829">
    <property type="term" value="C:cytosol"/>
    <property type="evidence" value="ECO:0007669"/>
    <property type="project" value="TreeGrafter"/>
</dbReference>
<dbReference type="GO" id="GO:0033194">
    <property type="term" value="P:response to hydroperoxide"/>
    <property type="evidence" value="ECO:0007669"/>
    <property type="project" value="TreeGrafter"/>
</dbReference>
<dbReference type="HAMAP" id="MF_00652">
    <property type="entry name" value="UPF0246"/>
    <property type="match status" value="1"/>
</dbReference>
<dbReference type="InterPro" id="IPR005583">
    <property type="entry name" value="YaaA"/>
</dbReference>
<dbReference type="NCBIfam" id="NF002541">
    <property type="entry name" value="PRK02101.1-1"/>
    <property type="match status" value="1"/>
</dbReference>
<dbReference type="NCBIfam" id="NF002542">
    <property type="entry name" value="PRK02101.1-3"/>
    <property type="match status" value="1"/>
</dbReference>
<dbReference type="PANTHER" id="PTHR30283:SF4">
    <property type="entry name" value="PEROXIDE STRESS RESISTANCE PROTEIN YAAA"/>
    <property type="match status" value="1"/>
</dbReference>
<dbReference type="PANTHER" id="PTHR30283">
    <property type="entry name" value="PEROXIDE STRESS RESPONSE PROTEIN YAAA"/>
    <property type="match status" value="1"/>
</dbReference>
<dbReference type="Pfam" id="PF03883">
    <property type="entry name" value="H2O2_YaaD"/>
    <property type="match status" value="1"/>
</dbReference>
<comment type="similarity">
    <text evidence="1">Belongs to the UPF0246 family.</text>
</comment>
<gene>
    <name type="ordered locus">ASA_3634</name>
</gene>
<feature type="chain" id="PRO_1000061584" description="UPF0246 protein ASA_3634">
    <location>
        <begin position="1"/>
        <end position="257"/>
    </location>
</feature>
<protein>
    <recommendedName>
        <fullName evidence="1">UPF0246 protein ASA_3634</fullName>
    </recommendedName>
</protein>
<evidence type="ECO:0000255" key="1">
    <source>
        <dbReference type="HAMAP-Rule" id="MF_00652"/>
    </source>
</evidence>
<name>Y3634_AERS4</name>
<reference key="1">
    <citation type="journal article" date="2008" name="BMC Genomics">
        <title>The genome of Aeromonas salmonicida subsp. salmonicida A449: insights into the evolution of a fish pathogen.</title>
        <authorList>
            <person name="Reith M.E."/>
            <person name="Singh R.K."/>
            <person name="Curtis B."/>
            <person name="Boyd J.M."/>
            <person name="Bouevitch A."/>
            <person name="Kimball J."/>
            <person name="Munholland J."/>
            <person name="Murphy C."/>
            <person name="Sarty D."/>
            <person name="Williams J."/>
            <person name="Nash J.H."/>
            <person name="Johnson S.C."/>
            <person name="Brown L.L."/>
        </authorList>
    </citation>
    <scope>NUCLEOTIDE SEQUENCE [LARGE SCALE GENOMIC DNA]</scope>
    <source>
        <strain>A449</strain>
    </source>
</reference>
<organism>
    <name type="scientific">Aeromonas salmonicida (strain A449)</name>
    <dbReference type="NCBI Taxonomy" id="382245"/>
    <lineage>
        <taxon>Bacteria</taxon>
        <taxon>Pseudomonadati</taxon>
        <taxon>Pseudomonadota</taxon>
        <taxon>Gammaproteobacteria</taxon>
        <taxon>Aeromonadales</taxon>
        <taxon>Aeromonadaceae</taxon>
        <taxon>Aeromonas</taxon>
    </lineage>
</organism>